<reference key="1">
    <citation type="submission" date="2008-04" db="EMBL/GenBank/DDBJ databases">
        <title>Complete sequence of Yersinia pseudotuberculosis PB1/+.</title>
        <authorList>
            <person name="Copeland A."/>
            <person name="Lucas S."/>
            <person name="Lapidus A."/>
            <person name="Glavina del Rio T."/>
            <person name="Dalin E."/>
            <person name="Tice H."/>
            <person name="Bruce D."/>
            <person name="Goodwin L."/>
            <person name="Pitluck S."/>
            <person name="Munk A.C."/>
            <person name="Brettin T."/>
            <person name="Detter J.C."/>
            <person name="Han C."/>
            <person name="Tapia R."/>
            <person name="Schmutz J."/>
            <person name="Larimer F."/>
            <person name="Land M."/>
            <person name="Hauser L."/>
            <person name="Challacombe J.F."/>
            <person name="Green L."/>
            <person name="Lindler L.E."/>
            <person name="Nikolich M.P."/>
            <person name="Richardson P."/>
        </authorList>
    </citation>
    <scope>NUCLEOTIDE SEQUENCE [LARGE SCALE GENOMIC DNA]</scope>
    <source>
        <strain>PB1/+</strain>
    </source>
</reference>
<organism>
    <name type="scientific">Yersinia pseudotuberculosis serotype IB (strain PB1/+)</name>
    <dbReference type="NCBI Taxonomy" id="502801"/>
    <lineage>
        <taxon>Bacteria</taxon>
        <taxon>Pseudomonadati</taxon>
        <taxon>Pseudomonadota</taxon>
        <taxon>Gammaproteobacteria</taxon>
        <taxon>Enterobacterales</taxon>
        <taxon>Yersiniaceae</taxon>
        <taxon>Yersinia</taxon>
    </lineage>
</organism>
<evidence type="ECO:0000255" key="1">
    <source>
        <dbReference type="HAMAP-Rule" id="MF_00197"/>
    </source>
</evidence>
<name>DAPF_YERPB</name>
<proteinExistence type="inferred from homology"/>
<feature type="chain" id="PRO_1000099274" description="Diaminopimelate epimerase">
    <location>
        <begin position="1"/>
        <end position="274"/>
    </location>
</feature>
<feature type="active site" description="Proton donor" evidence="1">
    <location>
        <position position="73"/>
    </location>
</feature>
<feature type="active site" description="Proton acceptor" evidence="1">
    <location>
        <position position="217"/>
    </location>
</feature>
<feature type="binding site" evidence="1">
    <location>
        <position position="11"/>
    </location>
    <ligand>
        <name>substrate</name>
    </ligand>
</feature>
<feature type="binding site" evidence="1">
    <location>
        <position position="44"/>
    </location>
    <ligand>
        <name>substrate</name>
    </ligand>
</feature>
<feature type="binding site" evidence="1">
    <location>
        <position position="64"/>
    </location>
    <ligand>
        <name>substrate</name>
    </ligand>
</feature>
<feature type="binding site" evidence="1">
    <location>
        <begin position="74"/>
        <end position="75"/>
    </location>
    <ligand>
        <name>substrate</name>
    </ligand>
</feature>
<feature type="binding site" evidence="1">
    <location>
        <position position="157"/>
    </location>
    <ligand>
        <name>substrate</name>
    </ligand>
</feature>
<feature type="binding site" evidence="1">
    <location>
        <position position="190"/>
    </location>
    <ligand>
        <name>substrate</name>
    </ligand>
</feature>
<feature type="binding site" evidence="1">
    <location>
        <begin position="208"/>
        <end position="209"/>
    </location>
    <ligand>
        <name>substrate</name>
    </ligand>
</feature>
<feature type="binding site" evidence="1">
    <location>
        <begin position="218"/>
        <end position="219"/>
    </location>
    <ligand>
        <name>substrate</name>
    </ligand>
</feature>
<feature type="site" description="Could be important to modulate the pK values of the two catalytic cysteine residues" evidence="1">
    <location>
        <position position="159"/>
    </location>
</feature>
<feature type="site" description="Could be important to modulate the pK values of the two catalytic cysteine residues" evidence="1">
    <location>
        <position position="208"/>
    </location>
</feature>
<feature type="site" description="Important for dimerization" evidence="1">
    <location>
        <position position="268"/>
    </location>
</feature>
<comment type="function">
    <text evidence="1">Catalyzes the stereoinversion of LL-2,6-diaminopimelate (L,L-DAP) to meso-diaminopimelate (meso-DAP), a precursor of L-lysine and an essential component of the bacterial peptidoglycan.</text>
</comment>
<comment type="catalytic activity">
    <reaction evidence="1">
        <text>(2S,6S)-2,6-diaminopimelate = meso-2,6-diaminopimelate</text>
        <dbReference type="Rhea" id="RHEA:15393"/>
        <dbReference type="ChEBI" id="CHEBI:57609"/>
        <dbReference type="ChEBI" id="CHEBI:57791"/>
        <dbReference type="EC" id="5.1.1.7"/>
    </reaction>
</comment>
<comment type="pathway">
    <text evidence="1">Amino-acid biosynthesis; L-lysine biosynthesis via DAP pathway; DL-2,6-diaminopimelate from LL-2,6-diaminopimelate: step 1/1.</text>
</comment>
<comment type="subunit">
    <text evidence="1">Homodimer.</text>
</comment>
<comment type="subcellular location">
    <subcellularLocation>
        <location evidence="1">Cytoplasm</location>
    </subcellularLocation>
</comment>
<comment type="similarity">
    <text evidence="1">Belongs to the diaminopimelate epimerase family.</text>
</comment>
<sequence>MQFSKMHGLGNDFMVVDAVTQNVYFSPELIRRLADRHTGVGFDQMLVVEPPYDPELDFHYRIFNADGSEVSQCGNGARCFARFVRLKGLTNKREISVSTQTGRMILSVTEDEQVCVNMGEPDFEPQTVPFRAAKAEKTYILRAAEHTVLCGVVSMGNPHCVMQVDDVSVANVALLGPVLENHERFPERANIGFMQVVSRDHIRLRVYERGAGETQACGSGACAAVAVGVVQDLLNENVHVELPGGSLHIRWQGPGHPLYMTGPATHVYDGFIHL</sequence>
<gene>
    <name evidence="1" type="primary">dapF</name>
    <name type="ordered locus">YPTS_0203</name>
</gene>
<keyword id="KW-0028">Amino-acid biosynthesis</keyword>
<keyword id="KW-0963">Cytoplasm</keyword>
<keyword id="KW-0413">Isomerase</keyword>
<keyword id="KW-0457">Lysine biosynthesis</keyword>
<accession>B2K072</accession>
<protein>
    <recommendedName>
        <fullName evidence="1">Diaminopimelate epimerase</fullName>
        <shortName evidence="1">DAP epimerase</shortName>
        <ecNumber evidence="1">5.1.1.7</ecNumber>
    </recommendedName>
    <alternativeName>
        <fullName evidence="1">PLP-independent amino acid racemase</fullName>
    </alternativeName>
</protein>
<dbReference type="EC" id="5.1.1.7" evidence="1"/>
<dbReference type="EMBL" id="CP001048">
    <property type="protein sequence ID" value="ACC87200.1"/>
    <property type="molecule type" value="Genomic_DNA"/>
</dbReference>
<dbReference type="RefSeq" id="WP_002211471.1">
    <property type="nucleotide sequence ID" value="NZ_CP009780.1"/>
</dbReference>
<dbReference type="SMR" id="B2K072"/>
<dbReference type="GeneID" id="57974864"/>
<dbReference type="KEGG" id="ypb:YPTS_0203"/>
<dbReference type="PATRIC" id="fig|502801.10.peg.3882"/>
<dbReference type="UniPathway" id="UPA00034">
    <property type="reaction ID" value="UER00025"/>
</dbReference>
<dbReference type="GO" id="GO:0005829">
    <property type="term" value="C:cytosol"/>
    <property type="evidence" value="ECO:0007669"/>
    <property type="project" value="TreeGrafter"/>
</dbReference>
<dbReference type="GO" id="GO:0008837">
    <property type="term" value="F:diaminopimelate epimerase activity"/>
    <property type="evidence" value="ECO:0007669"/>
    <property type="project" value="UniProtKB-UniRule"/>
</dbReference>
<dbReference type="GO" id="GO:0009089">
    <property type="term" value="P:lysine biosynthetic process via diaminopimelate"/>
    <property type="evidence" value="ECO:0007669"/>
    <property type="project" value="UniProtKB-UniRule"/>
</dbReference>
<dbReference type="FunFam" id="3.10.310.10:FF:000001">
    <property type="entry name" value="Diaminopimelate epimerase"/>
    <property type="match status" value="1"/>
</dbReference>
<dbReference type="FunFam" id="3.10.310.10:FF:000002">
    <property type="entry name" value="Diaminopimelate epimerase"/>
    <property type="match status" value="1"/>
</dbReference>
<dbReference type="Gene3D" id="3.10.310.10">
    <property type="entry name" value="Diaminopimelate Epimerase, Chain A, domain 1"/>
    <property type="match status" value="2"/>
</dbReference>
<dbReference type="HAMAP" id="MF_00197">
    <property type="entry name" value="DAP_epimerase"/>
    <property type="match status" value="1"/>
</dbReference>
<dbReference type="InterPro" id="IPR018510">
    <property type="entry name" value="DAP_epimerase_AS"/>
</dbReference>
<dbReference type="InterPro" id="IPR001653">
    <property type="entry name" value="DAP_epimerase_DapF"/>
</dbReference>
<dbReference type="NCBIfam" id="TIGR00652">
    <property type="entry name" value="DapF"/>
    <property type="match status" value="1"/>
</dbReference>
<dbReference type="PANTHER" id="PTHR31689:SF0">
    <property type="entry name" value="DIAMINOPIMELATE EPIMERASE"/>
    <property type="match status" value="1"/>
</dbReference>
<dbReference type="PANTHER" id="PTHR31689">
    <property type="entry name" value="DIAMINOPIMELATE EPIMERASE, CHLOROPLASTIC"/>
    <property type="match status" value="1"/>
</dbReference>
<dbReference type="Pfam" id="PF01678">
    <property type="entry name" value="DAP_epimerase"/>
    <property type="match status" value="2"/>
</dbReference>
<dbReference type="SUPFAM" id="SSF54506">
    <property type="entry name" value="Diaminopimelate epimerase-like"/>
    <property type="match status" value="1"/>
</dbReference>
<dbReference type="PROSITE" id="PS01326">
    <property type="entry name" value="DAP_EPIMERASE"/>
    <property type="match status" value="1"/>
</dbReference>